<proteinExistence type="inferred from homology"/>
<evidence type="ECO:0000256" key="1">
    <source>
        <dbReference type="SAM" id="MobiDB-lite"/>
    </source>
</evidence>
<evidence type="ECO:0000303" key="2">
    <source>
    </source>
</evidence>
<evidence type="ECO:0000305" key="3"/>
<gene>
    <name type="primary">xcyIM</name>
</gene>
<comment type="function">
    <text evidence="2">A beta subtype methylase, recognizes the double-stranded sequence 5'-CCCGGG-3', methylates C-2 on both strands, and protects the DNA from cleavage by the XcyI endonuclease.</text>
</comment>
<comment type="catalytic activity">
    <reaction>
        <text>a 2'-deoxycytidine in DNA + S-adenosyl-L-methionine = an N(4)-methyl-2'-deoxycytidine in DNA + S-adenosyl-L-homocysteine + H(+)</text>
        <dbReference type="Rhea" id="RHEA:16857"/>
        <dbReference type="Rhea" id="RHEA-COMP:11369"/>
        <dbReference type="Rhea" id="RHEA-COMP:13674"/>
        <dbReference type="ChEBI" id="CHEBI:15378"/>
        <dbReference type="ChEBI" id="CHEBI:57856"/>
        <dbReference type="ChEBI" id="CHEBI:59789"/>
        <dbReference type="ChEBI" id="CHEBI:85452"/>
        <dbReference type="ChEBI" id="CHEBI:137933"/>
        <dbReference type="EC" id="2.1.1.113"/>
    </reaction>
</comment>
<comment type="similarity">
    <text evidence="3">Belongs to the N(4)/N(6)-methyltransferase family. N(4) subfamily.</text>
</comment>
<accession>P30774</accession>
<reference key="1">
    <citation type="journal article" date="1992" name="Nucleic Acids Res.">
        <title>Structure and evolution of the XcyI restriction-modification system.</title>
        <authorList>
            <person name="Withers B."/>
            <person name="Ambroso L.A."/>
            <person name="Dunbar J.C."/>
        </authorList>
    </citation>
    <scope>NUCLEOTIDE SEQUENCE [GENOMIC DNA]</scope>
    <source>
        <strain>13D5</strain>
    </source>
</reference>
<reference key="2">
    <citation type="journal article" date="2003" name="Nucleic Acids Res.">
        <title>A nomenclature for restriction enzymes, DNA methyltransferases, homing endonucleases and their genes.</title>
        <authorList>
            <person name="Roberts R.J."/>
            <person name="Belfort M."/>
            <person name="Bestor T."/>
            <person name="Bhagwat A.S."/>
            <person name="Bickle T.A."/>
            <person name="Bitinaite J."/>
            <person name="Blumenthal R.M."/>
            <person name="Degtyarev S.K."/>
            <person name="Dryden D.T."/>
            <person name="Dybvig K."/>
            <person name="Firman K."/>
            <person name="Gromova E.S."/>
            <person name="Gumport R.I."/>
            <person name="Halford S.E."/>
            <person name="Hattman S."/>
            <person name="Heitman J."/>
            <person name="Hornby D.P."/>
            <person name="Janulaitis A."/>
            <person name="Jeltsch A."/>
            <person name="Josephsen J."/>
            <person name="Kiss A."/>
            <person name="Klaenhammer T.R."/>
            <person name="Kobayashi I."/>
            <person name="Kong H."/>
            <person name="Krueger D.H."/>
            <person name="Lacks S."/>
            <person name="Marinus M.G."/>
            <person name="Miyahara M."/>
            <person name="Morgan R.D."/>
            <person name="Murray N.E."/>
            <person name="Nagaraja V."/>
            <person name="Piekarowicz A."/>
            <person name="Pingoud A."/>
            <person name="Raleigh E."/>
            <person name="Rao D.N."/>
            <person name="Reich N."/>
            <person name="Repin V.E."/>
            <person name="Selker E.U."/>
            <person name="Shaw P.C."/>
            <person name="Stein D.C."/>
            <person name="Stoddard B.L."/>
            <person name="Szybalski W."/>
            <person name="Trautner T.A."/>
            <person name="Van Etten J.L."/>
            <person name="Vitor J.M."/>
            <person name="Wilson G.G."/>
            <person name="Xu S.Y."/>
        </authorList>
    </citation>
    <scope>NOMENCLATURE</scope>
    <scope>SUBTYPE</scope>
</reference>
<organism>
    <name type="scientific">Xanthomonas campestris pv. cyanopsidis</name>
    <dbReference type="NCBI Taxonomy" id="29444"/>
    <lineage>
        <taxon>Bacteria</taxon>
        <taxon>Pseudomonadati</taxon>
        <taxon>Pseudomonadota</taxon>
        <taxon>Gammaproteobacteria</taxon>
        <taxon>Lysobacterales</taxon>
        <taxon>Lysobacteraceae</taxon>
        <taxon>Xanthomonas</taxon>
    </lineage>
</organism>
<feature type="chain" id="PRO_0000087935" description="Type II methyltransferase M.XycI">
    <location>
        <begin position="1"/>
        <end position="300"/>
    </location>
</feature>
<feature type="region of interest" description="Disordered" evidence="1">
    <location>
        <begin position="109"/>
        <end position="129"/>
    </location>
</feature>
<feature type="compositionally biased region" description="Basic and acidic residues" evidence="1">
    <location>
        <begin position="112"/>
        <end position="127"/>
    </location>
</feature>
<dbReference type="EC" id="2.1.1.113"/>
<dbReference type="EMBL" id="M98768">
    <property type="protein sequence ID" value="AAA27608.1"/>
    <property type="molecule type" value="Genomic_DNA"/>
</dbReference>
<dbReference type="PIR" id="S35549">
    <property type="entry name" value="S35549"/>
</dbReference>
<dbReference type="SMR" id="P30774"/>
<dbReference type="REBASE" id="3529">
    <property type="entry name" value="M.XcyI"/>
</dbReference>
<dbReference type="BRENDA" id="2.1.1.113">
    <property type="organism ID" value="6711"/>
</dbReference>
<dbReference type="PRO" id="PR:P30774"/>
<dbReference type="GO" id="GO:0005737">
    <property type="term" value="C:cytoplasm"/>
    <property type="evidence" value="ECO:0007669"/>
    <property type="project" value="TreeGrafter"/>
</dbReference>
<dbReference type="GO" id="GO:0003677">
    <property type="term" value="F:DNA binding"/>
    <property type="evidence" value="ECO:0007669"/>
    <property type="project" value="UniProtKB-KW"/>
</dbReference>
<dbReference type="GO" id="GO:0008170">
    <property type="term" value="F:N-methyltransferase activity"/>
    <property type="evidence" value="ECO:0007669"/>
    <property type="project" value="InterPro"/>
</dbReference>
<dbReference type="GO" id="GO:0015667">
    <property type="term" value="F:site-specific DNA-methyltransferase (cytosine-N4-specific) activity"/>
    <property type="evidence" value="ECO:0007669"/>
    <property type="project" value="UniProtKB-EC"/>
</dbReference>
<dbReference type="GO" id="GO:0009307">
    <property type="term" value="P:DNA restriction-modification system"/>
    <property type="evidence" value="ECO:0007669"/>
    <property type="project" value="UniProtKB-KW"/>
</dbReference>
<dbReference type="GO" id="GO:0032259">
    <property type="term" value="P:methylation"/>
    <property type="evidence" value="ECO:0007669"/>
    <property type="project" value="UniProtKB-KW"/>
</dbReference>
<dbReference type="Gene3D" id="3.40.50.150">
    <property type="entry name" value="Vaccinia Virus protein VP39"/>
    <property type="match status" value="1"/>
</dbReference>
<dbReference type="InterPro" id="IPR002941">
    <property type="entry name" value="DNA_methylase_N4/N6"/>
</dbReference>
<dbReference type="InterPro" id="IPR017985">
    <property type="entry name" value="MeTrfase_CN4_CS"/>
</dbReference>
<dbReference type="InterPro" id="IPR001091">
    <property type="entry name" value="RM_Methyltransferase"/>
</dbReference>
<dbReference type="InterPro" id="IPR029063">
    <property type="entry name" value="SAM-dependent_MTases_sf"/>
</dbReference>
<dbReference type="PANTHER" id="PTHR13370">
    <property type="entry name" value="RNA METHYLASE-RELATED"/>
    <property type="match status" value="1"/>
</dbReference>
<dbReference type="PANTHER" id="PTHR13370:SF3">
    <property type="entry name" value="TRNA (GUANINE(10)-N2)-METHYLTRANSFERASE HOMOLOG"/>
    <property type="match status" value="1"/>
</dbReference>
<dbReference type="Pfam" id="PF01555">
    <property type="entry name" value="N6_N4_Mtase"/>
    <property type="match status" value="1"/>
</dbReference>
<dbReference type="PRINTS" id="PR00508">
    <property type="entry name" value="S21N4MTFRASE"/>
</dbReference>
<dbReference type="SUPFAM" id="SSF53335">
    <property type="entry name" value="S-adenosyl-L-methionine-dependent methyltransferases"/>
    <property type="match status" value="1"/>
</dbReference>
<dbReference type="PROSITE" id="PS00093">
    <property type="entry name" value="N4_MTASE"/>
    <property type="match status" value="1"/>
</dbReference>
<keyword id="KW-0238">DNA-binding</keyword>
<keyword id="KW-0489">Methyltransferase</keyword>
<keyword id="KW-0680">Restriction system</keyword>
<keyword id="KW-0949">S-adenosyl-L-methionine</keyword>
<keyword id="KW-0808">Transferase</keyword>
<sequence>MPKANTAPPSGVERILRPEPLILRGSTLFEGDALTVLRRLPSGSVRCVVTSPPYWGLRDYGIEEQIGLEVTMPQFLHRLVAIFAEVKRVLTDDGTLWLNIGDGYTSGNRGYRAPDKKNPARAMDVRPDTPVGLKPKDLMGIPWRLAFALQDDGWYLRSDIVWNKPNAMPESVKDRPARSHEFLFMFTKSEKYFYDWQAAREPADGGGLRNRRSVWNVNTKPFAGAHFTTFPPELIRPCIHASTEPGDYVLDPFFGSGTVGLVCQDENRQYVGIELNPEYVTLAADRLQGQNSNVIRIAAA</sequence>
<name>MTX1_XANCC</name>
<protein>
    <recommendedName>
        <fullName evidence="2">Type II methyltransferase M.XycI</fullName>
        <shortName evidence="2">M.XcyI</shortName>
        <ecNumber>2.1.1.113</ecNumber>
    </recommendedName>
    <alternativeName>
        <fullName>Modification methylase XcyI</fullName>
    </alternativeName>
    <alternativeName>
        <fullName>N-4 cytosine-specific methyltransferase XcyI</fullName>
    </alternativeName>
</protein>